<comment type="function">
    <text evidence="2 4">Probably controls expression of its associated restriction-modification system MunI.</text>
</comment>
<proteinExistence type="predicted"/>
<accession>P43640</accession>
<evidence type="ECO:0000255" key="1">
    <source>
        <dbReference type="PROSITE-ProRule" id="PRU00257"/>
    </source>
</evidence>
<evidence type="ECO:0000303" key="2">
    <source>
    </source>
</evidence>
<evidence type="ECO:0000303" key="3">
    <source>
    </source>
</evidence>
<evidence type="ECO:0000305" key="4">
    <source>
    </source>
</evidence>
<protein>
    <recommendedName>
        <fullName evidence="2">Control protein C.MunI</fullName>
    </recommendedName>
    <alternativeName>
        <fullName evidence="3">Regulatory protein MunI</fullName>
    </alternativeName>
</protein>
<keyword id="KW-0238">DNA-binding</keyword>
<keyword id="KW-0680">Restriction system</keyword>
<keyword id="KW-0804">Transcription</keyword>
<keyword id="KW-0805">Transcription regulation</keyword>
<sequence>MNDIKIRFGNKLKKLRKEKTDLSQESFAAQIDLDRTYYSSIENGKRNVSLVNLEKISAGLGITLSELFSDIEKE</sequence>
<reference key="1">
    <citation type="journal article" date="1994" name="Gene">
        <title>CAATTG-specific restriction-modification munI genes from Mycoplasma: sequence similarities between R.MunI and R.EcoRI.</title>
        <authorList>
            <person name="Siksnys V."/>
            <person name="Zareckaja N."/>
            <person name="Vaisvila R."/>
            <person name="Timinskas A."/>
            <person name="Stakenas P."/>
            <person name="Butkus V."/>
            <person name="Janulaitis A."/>
        </authorList>
    </citation>
    <scope>NUCLEOTIDE SEQUENCE [GENOMIC DNA]</scope>
    <scope>FUNCTION</scope>
</reference>
<reference key="2">
    <citation type="journal article" date="2003" name="Nucleic Acids Res.">
        <title>A nomenclature for restriction enzymes, DNA methyltransferases, homing endonucleases and their genes.</title>
        <authorList>
            <person name="Roberts R.J."/>
            <person name="Belfort M."/>
            <person name="Bestor T."/>
            <person name="Bhagwat A.S."/>
            <person name="Bickle T.A."/>
            <person name="Bitinaite J."/>
            <person name="Blumenthal R.M."/>
            <person name="Degtyarev S.K."/>
            <person name="Dryden D.T."/>
            <person name="Dybvig K."/>
            <person name="Firman K."/>
            <person name="Gromova E.S."/>
            <person name="Gumport R.I."/>
            <person name="Halford S.E."/>
            <person name="Hattman S."/>
            <person name="Heitman J."/>
            <person name="Hornby D.P."/>
            <person name="Janulaitis A."/>
            <person name="Jeltsch A."/>
            <person name="Josephsen J."/>
            <person name="Kiss A."/>
            <person name="Klaenhammer T.R."/>
            <person name="Kobayashi I."/>
            <person name="Kong H."/>
            <person name="Krueger D.H."/>
            <person name="Lacks S."/>
            <person name="Marinus M.G."/>
            <person name="Miyahara M."/>
            <person name="Morgan R.D."/>
            <person name="Murray N.E."/>
            <person name="Nagaraja V."/>
            <person name="Piekarowicz A."/>
            <person name="Pingoud A."/>
            <person name="Raleigh E."/>
            <person name="Rao D.N."/>
            <person name="Reich N."/>
            <person name="Repin V.E."/>
            <person name="Selker E.U."/>
            <person name="Shaw P.C."/>
            <person name="Stein D.C."/>
            <person name="Stoddard B.L."/>
            <person name="Szybalski W."/>
            <person name="Trautner T.A."/>
            <person name="Van Etten J.L."/>
            <person name="Vitor J.M."/>
            <person name="Wilson G.G."/>
            <person name="Xu S.Y."/>
        </authorList>
    </citation>
    <scope>NOMENCLATURE</scope>
</reference>
<name>MUNC_MYCSP</name>
<organism>
    <name type="scientific">Mycoplasma sp</name>
    <dbReference type="NCBI Taxonomy" id="2108"/>
    <lineage>
        <taxon>Bacteria</taxon>
        <taxon>Bacillati</taxon>
        <taxon>Mycoplasmatota</taxon>
        <taxon>Mollicutes</taxon>
        <taxon>Mycoplasmataceae</taxon>
        <taxon>Mycoplasma</taxon>
    </lineage>
</organism>
<dbReference type="EMBL" id="X76192">
    <property type="protein sequence ID" value="CAA53787.1"/>
    <property type="molecule type" value="Genomic_DNA"/>
</dbReference>
<dbReference type="PIR" id="S38900">
    <property type="entry name" value="S38900"/>
</dbReference>
<dbReference type="SMR" id="P43640"/>
<dbReference type="REBASE" id="3677">
    <property type="entry name" value="C.MunI"/>
</dbReference>
<dbReference type="GO" id="GO:0005829">
    <property type="term" value="C:cytosol"/>
    <property type="evidence" value="ECO:0007669"/>
    <property type="project" value="TreeGrafter"/>
</dbReference>
<dbReference type="GO" id="GO:0003677">
    <property type="term" value="F:DNA binding"/>
    <property type="evidence" value="ECO:0007669"/>
    <property type="project" value="UniProtKB-KW"/>
</dbReference>
<dbReference type="GO" id="GO:0003700">
    <property type="term" value="F:DNA-binding transcription factor activity"/>
    <property type="evidence" value="ECO:0007669"/>
    <property type="project" value="TreeGrafter"/>
</dbReference>
<dbReference type="GO" id="GO:0009307">
    <property type="term" value="P:DNA restriction-modification system"/>
    <property type="evidence" value="ECO:0007669"/>
    <property type="project" value="UniProtKB-KW"/>
</dbReference>
<dbReference type="CDD" id="cd00093">
    <property type="entry name" value="HTH_XRE"/>
    <property type="match status" value="1"/>
</dbReference>
<dbReference type="Gene3D" id="1.10.260.40">
    <property type="entry name" value="lambda repressor-like DNA-binding domains"/>
    <property type="match status" value="1"/>
</dbReference>
<dbReference type="InterPro" id="IPR050807">
    <property type="entry name" value="Bact_TransReg_Diox"/>
</dbReference>
<dbReference type="InterPro" id="IPR001387">
    <property type="entry name" value="Cro/C1-type_HTH"/>
</dbReference>
<dbReference type="InterPro" id="IPR010982">
    <property type="entry name" value="Lambda_DNA-bd_dom_sf"/>
</dbReference>
<dbReference type="PANTHER" id="PTHR46797">
    <property type="entry name" value="HTH-TYPE TRANSCRIPTIONAL REGULATOR"/>
    <property type="match status" value="1"/>
</dbReference>
<dbReference type="PANTHER" id="PTHR46797:SF23">
    <property type="entry name" value="HTH-TYPE TRANSCRIPTIONAL REGULATOR SUTR"/>
    <property type="match status" value="1"/>
</dbReference>
<dbReference type="Pfam" id="PF01381">
    <property type="entry name" value="HTH_3"/>
    <property type="match status" value="1"/>
</dbReference>
<dbReference type="SMART" id="SM00530">
    <property type="entry name" value="HTH_XRE"/>
    <property type="match status" value="1"/>
</dbReference>
<dbReference type="SUPFAM" id="SSF47413">
    <property type="entry name" value="lambda repressor-like DNA-binding domains"/>
    <property type="match status" value="1"/>
</dbReference>
<dbReference type="PROSITE" id="PS50943">
    <property type="entry name" value="HTH_CROC1"/>
    <property type="match status" value="1"/>
</dbReference>
<gene>
    <name evidence="3" type="primary">munIC</name>
</gene>
<feature type="chain" id="PRO_0000149727" description="Control protein C.MunI">
    <location>
        <begin position="1"/>
        <end position="74"/>
    </location>
</feature>
<feature type="domain" description="HTH cro/C1-type" evidence="1">
    <location>
        <begin position="12"/>
        <end position="67"/>
    </location>
</feature>
<feature type="DNA-binding region" description="H-T-H motif" evidence="1">
    <location>
        <begin position="23"/>
        <end position="42"/>
    </location>
</feature>